<proteinExistence type="inferred from homology"/>
<evidence type="ECO:0000255" key="1">
    <source>
        <dbReference type="HAMAP-Rule" id="MF_01101"/>
    </source>
</evidence>
<protein>
    <recommendedName>
        <fullName evidence="1">UPF0208 membrane protein YPTB2595</fullName>
    </recommendedName>
</protein>
<name>Y2595_YERPS</name>
<comment type="subcellular location">
    <subcellularLocation>
        <location evidence="1">Cell inner membrane</location>
        <topology evidence="1">Multi-pass membrane protein</topology>
    </subcellularLocation>
</comment>
<comment type="similarity">
    <text evidence="1">Belongs to the UPF0208 family.</text>
</comment>
<sequence length="151" mass="17062">MTIKPSDSVSWFQVLQRGQHYMKTWPADKRLAPVFPENRVTVVTRFGIRFMPPLAIFTLTWQIALGGQLGPAIATALFACGLPLQGLWWLGKRAITPLPPTLLQWFHEVRHKLSEAGQAVAPIEPIPTYQSLADLLKRAFKQLDKTFLDDL</sequence>
<gene>
    <name type="ordered locus">YPTB2595</name>
</gene>
<organism>
    <name type="scientific">Yersinia pseudotuberculosis serotype I (strain IP32953)</name>
    <dbReference type="NCBI Taxonomy" id="273123"/>
    <lineage>
        <taxon>Bacteria</taxon>
        <taxon>Pseudomonadati</taxon>
        <taxon>Pseudomonadota</taxon>
        <taxon>Gammaproteobacteria</taxon>
        <taxon>Enterobacterales</taxon>
        <taxon>Yersiniaceae</taxon>
        <taxon>Yersinia</taxon>
    </lineage>
</organism>
<accession>Q668Z2</accession>
<dbReference type="EMBL" id="BX936398">
    <property type="protein sequence ID" value="CAH21833.1"/>
    <property type="molecule type" value="Genomic_DNA"/>
</dbReference>
<dbReference type="RefSeq" id="WP_011192676.1">
    <property type="nucleotide sequence ID" value="NC_006155.1"/>
</dbReference>
<dbReference type="GeneID" id="49785401"/>
<dbReference type="KEGG" id="ypo:BZ17_4043"/>
<dbReference type="KEGG" id="yps:YPTB2595"/>
<dbReference type="PATRIC" id="fig|273123.14.peg.4246"/>
<dbReference type="Proteomes" id="UP000001011">
    <property type="component" value="Chromosome"/>
</dbReference>
<dbReference type="GO" id="GO:0005886">
    <property type="term" value="C:plasma membrane"/>
    <property type="evidence" value="ECO:0007669"/>
    <property type="project" value="UniProtKB-SubCell"/>
</dbReference>
<dbReference type="HAMAP" id="MF_01101">
    <property type="entry name" value="UPF0208"/>
    <property type="match status" value="1"/>
</dbReference>
<dbReference type="InterPro" id="IPR007334">
    <property type="entry name" value="UPF0208"/>
</dbReference>
<dbReference type="NCBIfam" id="NF002493">
    <property type="entry name" value="PRK01816.1"/>
    <property type="match status" value="1"/>
</dbReference>
<dbReference type="Pfam" id="PF04217">
    <property type="entry name" value="DUF412"/>
    <property type="match status" value="1"/>
</dbReference>
<keyword id="KW-0997">Cell inner membrane</keyword>
<keyword id="KW-1003">Cell membrane</keyword>
<keyword id="KW-0472">Membrane</keyword>
<keyword id="KW-0812">Transmembrane</keyword>
<keyword id="KW-1133">Transmembrane helix</keyword>
<feature type="chain" id="PRO_0000080829" description="UPF0208 membrane protein YPTB2595">
    <location>
        <begin position="1"/>
        <end position="151"/>
    </location>
</feature>
<feature type="transmembrane region" description="Helical" evidence="1">
    <location>
        <begin position="46"/>
        <end position="66"/>
    </location>
</feature>
<feature type="transmembrane region" description="Helical" evidence="1">
    <location>
        <begin position="69"/>
        <end position="89"/>
    </location>
</feature>
<reference key="1">
    <citation type="journal article" date="2004" name="Proc. Natl. Acad. Sci. U.S.A.">
        <title>Insights into the evolution of Yersinia pestis through whole-genome comparison with Yersinia pseudotuberculosis.</title>
        <authorList>
            <person name="Chain P.S.G."/>
            <person name="Carniel E."/>
            <person name="Larimer F.W."/>
            <person name="Lamerdin J."/>
            <person name="Stoutland P.O."/>
            <person name="Regala W.M."/>
            <person name="Georgescu A.M."/>
            <person name="Vergez L.M."/>
            <person name="Land M.L."/>
            <person name="Motin V.L."/>
            <person name="Brubaker R.R."/>
            <person name="Fowler J."/>
            <person name="Hinnebusch J."/>
            <person name="Marceau M."/>
            <person name="Medigue C."/>
            <person name="Simonet M."/>
            <person name="Chenal-Francisque V."/>
            <person name="Souza B."/>
            <person name="Dacheux D."/>
            <person name="Elliott J.M."/>
            <person name="Derbise A."/>
            <person name="Hauser L.J."/>
            <person name="Garcia E."/>
        </authorList>
    </citation>
    <scope>NUCLEOTIDE SEQUENCE [LARGE SCALE GENOMIC DNA]</scope>
    <source>
        <strain>IP32953</strain>
    </source>
</reference>